<protein>
    <recommendedName>
        <fullName evidence="1">S-adenosylmethionine synthase</fullName>
        <shortName evidence="1">AdoMet synthase</shortName>
        <ecNumber evidence="1">2.5.1.6</ecNumber>
    </recommendedName>
    <alternativeName>
        <fullName evidence="1">MAT</fullName>
    </alternativeName>
    <alternativeName>
        <fullName evidence="1">Methionine adenosyltransferase</fullName>
    </alternativeName>
</protein>
<keyword id="KW-0067">ATP-binding</keyword>
<keyword id="KW-0963">Cytoplasm</keyword>
<keyword id="KW-0460">Magnesium</keyword>
<keyword id="KW-0479">Metal-binding</keyword>
<keyword id="KW-0547">Nucleotide-binding</keyword>
<keyword id="KW-0554">One-carbon metabolism</keyword>
<keyword id="KW-0630">Potassium</keyword>
<keyword id="KW-0808">Transferase</keyword>
<proteinExistence type="inferred from homology"/>
<gene>
    <name evidence="1" type="primary">metK</name>
    <name type="ordered locus">CMM_1777</name>
</gene>
<feature type="chain" id="PRO_1000007934" description="S-adenosylmethionine synthase">
    <location>
        <begin position="1"/>
        <end position="403"/>
    </location>
</feature>
<feature type="region of interest" description="Flexible loop" evidence="1">
    <location>
        <begin position="100"/>
        <end position="110"/>
    </location>
</feature>
<feature type="region of interest" description="Disordered" evidence="2">
    <location>
        <begin position="106"/>
        <end position="126"/>
    </location>
</feature>
<feature type="binding site" description="in other chain" evidence="1">
    <location>
        <position position="16"/>
    </location>
    <ligand>
        <name>ATP</name>
        <dbReference type="ChEBI" id="CHEBI:30616"/>
        <note>ligand shared between two neighboring subunits</note>
    </ligand>
</feature>
<feature type="binding site" evidence="1">
    <location>
        <position position="18"/>
    </location>
    <ligand>
        <name>Mg(2+)</name>
        <dbReference type="ChEBI" id="CHEBI:18420"/>
    </ligand>
</feature>
<feature type="binding site" evidence="1">
    <location>
        <position position="44"/>
    </location>
    <ligand>
        <name>K(+)</name>
        <dbReference type="ChEBI" id="CHEBI:29103"/>
    </ligand>
</feature>
<feature type="binding site" description="in other chain" evidence="1">
    <location>
        <position position="57"/>
    </location>
    <ligand>
        <name>L-methionine</name>
        <dbReference type="ChEBI" id="CHEBI:57844"/>
        <note>ligand shared between two neighboring subunits</note>
    </ligand>
</feature>
<feature type="binding site" description="in other chain" evidence="1">
    <location>
        <position position="100"/>
    </location>
    <ligand>
        <name>L-methionine</name>
        <dbReference type="ChEBI" id="CHEBI:57844"/>
        <note>ligand shared between two neighboring subunits</note>
    </ligand>
</feature>
<feature type="binding site" description="in other chain" evidence="1">
    <location>
        <begin position="176"/>
        <end position="178"/>
    </location>
    <ligand>
        <name>ATP</name>
        <dbReference type="ChEBI" id="CHEBI:30616"/>
        <note>ligand shared between two neighboring subunits</note>
    </ligand>
</feature>
<feature type="binding site" description="in other chain" evidence="1">
    <location>
        <begin position="248"/>
        <end position="249"/>
    </location>
    <ligand>
        <name>ATP</name>
        <dbReference type="ChEBI" id="CHEBI:30616"/>
        <note>ligand shared between two neighboring subunits</note>
    </ligand>
</feature>
<feature type="binding site" evidence="1">
    <location>
        <position position="257"/>
    </location>
    <ligand>
        <name>ATP</name>
        <dbReference type="ChEBI" id="CHEBI:30616"/>
        <note>ligand shared between two neighboring subunits</note>
    </ligand>
</feature>
<feature type="binding site" evidence="1">
    <location>
        <position position="257"/>
    </location>
    <ligand>
        <name>L-methionine</name>
        <dbReference type="ChEBI" id="CHEBI:57844"/>
        <note>ligand shared between two neighboring subunits</note>
    </ligand>
</feature>
<feature type="binding site" description="in other chain" evidence="1">
    <location>
        <begin position="263"/>
        <end position="264"/>
    </location>
    <ligand>
        <name>ATP</name>
        <dbReference type="ChEBI" id="CHEBI:30616"/>
        <note>ligand shared between two neighboring subunits</note>
    </ligand>
</feature>
<feature type="binding site" evidence="1">
    <location>
        <position position="280"/>
    </location>
    <ligand>
        <name>ATP</name>
        <dbReference type="ChEBI" id="CHEBI:30616"/>
        <note>ligand shared between two neighboring subunits</note>
    </ligand>
</feature>
<feature type="binding site" evidence="1">
    <location>
        <position position="284"/>
    </location>
    <ligand>
        <name>ATP</name>
        <dbReference type="ChEBI" id="CHEBI:30616"/>
        <note>ligand shared between two neighboring subunits</note>
    </ligand>
</feature>
<feature type="binding site" description="in other chain" evidence="1">
    <location>
        <position position="288"/>
    </location>
    <ligand>
        <name>L-methionine</name>
        <dbReference type="ChEBI" id="CHEBI:57844"/>
        <note>ligand shared between two neighboring subunits</note>
    </ligand>
</feature>
<sequence length="403" mass="43230">MTDLRLFTSESVTEGHPDKICDQISDSILDALLTQDPTSRAAVETLVTTGLVHVAGEVTTSGYVDIPQIVRDRIRDIGYDSSEVGFDGSNCGVTVSIGAQSPDIAQGVDRSYESRSGSASTDAHDLQGAGDQGLMFGYASRDTPVFMPLPIYLAHRLAERLAAVRHSGELAYLRPDGKTQVTIGYEGLVPRTVDTVVLSTQHGPQVSQEDLRREVEEHVIRPVLAAAAEIGIELDSRDATLLINPTGKFEIGGPKGDAGLTGRKIIVDTYGGFSRHGGGAFSGKDPSKVDRSAAYAMRWVAKNAVAAGLADRLEVQVAYAIGKAAPVGLYVETFGTAHVPEERIVRAIRETFDLRPAAIVERLDLLRPIYAQTAAYGHFGRELPDFTWEALDRVADLQSAAGL</sequence>
<reference key="1">
    <citation type="journal article" date="2008" name="J. Bacteriol.">
        <title>The genome sequence of the tomato-pathogenic actinomycete Clavibacter michiganensis subsp. michiganensis NCPPB382 reveals a large island involved in pathogenicity.</title>
        <authorList>
            <person name="Gartemann K.-H."/>
            <person name="Abt B."/>
            <person name="Bekel T."/>
            <person name="Burger A."/>
            <person name="Engemann J."/>
            <person name="Fluegel M."/>
            <person name="Gaigalat L."/>
            <person name="Goesmann A."/>
            <person name="Graefen I."/>
            <person name="Kalinowski J."/>
            <person name="Kaup O."/>
            <person name="Kirchner O."/>
            <person name="Krause L."/>
            <person name="Linke B."/>
            <person name="McHardy A."/>
            <person name="Meyer F."/>
            <person name="Pohle S."/>
            <person name="Rueckert C."/>
            <person name="Schneiker S."/>
            <person name="Zellermann E.-M."/>
            <person name="Puehler A."/>
            <person name="Eichenlaub R."/>
            <person name="Kaiser O."/>
            <person name="Bartels D."/>
        </authorList>
    </citation>
    <scope>NUCLEOTIDE SEQUENCE [LARGE SCALE GENOMIC DNA]</scope>
    <source>
        <strain>NCPPB 382</strain>
    </source>
</reference>
<name>METK_CLAM3</name>
<comment type="function">
    <text evidence="1">Catalyzes the formation of S-adenosylmethionine (AdoMet) from methionine and ATP. The overall synthetic reaction is composed of two sequential steps, AdoMet formation and the subsequent tripolyphosphate hydrolysis which occurs prior to release of AdoMet from the enzyme.</text>
</comment>
<comment type="catalytic activity">
    <reaction evidence="1">
        <text>L-methionine + ATP + H2O = S-adenosyl-L-methionine + phosphate + diphosphate</text>
        <dbReference type="Rhea" id="RHEA:21080"/>
        <dbReference type="ChEBI" id="CHEBI:15377"/>
        <dbReference type="ChEBI" id="CHEBI:30616"/>
        <dbReference type="ChEBI" id="CHEBI:33019"/>
        <dbReference type="ChEBI" id="CHEBI:43474"/>
        <dbReference type="ChEBI" id="CHEBI:57844"/>
        <dbReference type="ChEBI" id="CHEBI:59789"/>
        <dbReference type="EC" id="2.5.1.6"/>
    </reaction>
</comment>
<comment type="cofactor">
    <cofactor evidence="1">
        <name>Mg(2+)</name>
        <dbReference type="ChEBI" id="CHEBI:18420"/>
    </cofactor>
    <text evidence="1">Binds 2 divalent ions per subunit.</text>
</comment>
<comment type="cofactor">
    <cofactor evidence="1">
        <name>K(+)</name>
        <dbReference type="ChEBI" id="CHEBI:29103"/>
    </cofactor>
    <text evidence="1">Binds 1 potassium ion per subunit.</text>
</comment>
<comment type="pathway">
    <text evidence="1">Amino-acid biosynthesis; S-adenosyl-L-methionine biosynthesis; S-adenosyl-L-methionine from L-methionine: step 1/1.</text>
</comment>
<comment type="subunit">
    <text evidence="1">Homotetramer; dimer of dimers.</text>
</comment>
<comment type="subcellular location">
    <subcellularLocation>
        <location evidence="1">Cytoplasm</location>
    </subcellularLocation>
</comment>
<comment type="similarity">
    <text evidence="1">Belongs to the AdoMet synthase family.</text>
</comment>
<evidence type="ECO:0000255" key="1">
    <source>
        <dbReference type="HAMAP-Rule" id="MF_00086"/>
    </source>
</evidence>
<evidence type="ECO:0000256" key="2">
    <source>
        <dbReference type="SAM" id="MobiDB-lite"/>
    </source>
</evidence>
<organism>
    <name type="scientific">Clavibacter michiganensis subsp. michiganensis (strain NCPPB 382)</name>
    <dbReference type="NCBI Taxonomy" id="443906"/>
    <lineage>
        <taxon>Bacteria</taxon>
        <taxon>Bacillati</taxon>
        <taxon>Actinomycetota</taxon>
        <taxon>Actinomycetes</taxon>
        <taxon>Micrococcales</taxon>
        <taxon>Microbacteriaceae</taxon>
        <taxon>Clavibacter</taxon>
    </lineage>
</organism>
<accession>A5CRX0</accession>
<dbReference type="EC" id="2.5.1.6" evidence="1"/>
<dbReference type="EMBL" id="AM711867">
    <property type="protein sequence ID" value="CAN01833.1"/>
    <property type="molecule type" value="Genomic_DNA"/>
</dbReference>
<dbReference type="RefSeq" id="WP_012038465.1">
    <property type="nucleotide sequence ID" value="NC_009480.1"/>
</dbReference>
<dbReference type="SMR" id="A5CRX0"/>
<dbReference type="GeneID" id="92947764"/>
<dbReference type="KEGG" id="cmi:CMM_1777"/>
<dbReference type="eggNOG" id="COG0192">
    <property type="taxonomic scope" value="Bacteria"/>
</dbReference>
<dbReference type="HOGENOM" id="CLU_041802_1_1_11"/>
<dbReference type="OrthoDB" id="9801686at2"/>
<dbReference type="UniPathway" id="UPA00315">
    <property type="reaction ID" value="UER00080"/>
</dbReference>
<dbReference type="Proteomes" id="UP000001564">
    <property type="component" value="Chromosome"/>
</dbReference>
<dbReference type="GO" id="GO:0005737">
    <property type="term" value="C:cytoplasm"/>
    <property type="evidence" value="ECO:0007669"/>
    <property type="project" value="UniProtKB-SubCell"/>
</dbReference>
<dbReference type="GO" id="GO:0005524">
    <property type="term" value="F:ATP binding"/>
    <property type="evidence" value="ECO:0007669"/>
    <property type="project" value="UniProtKB-UniRule"/>
</dbReference>
<dbReference type="GO" id="GO:0000287">
    <property type="term" value="F:magnesium ion binding"/>
    <property type="evidence" value="ECO:0007669"/>
    <property type="project" value="UniProtKB-UniRule"/>
</dbReference>
<dbReference type="GO" id="GO:0004478">
    <property type="term" value="F:methionine adenosyltransferase activity"/>
    <property type="evidence" value="ECO:0007669"/>
    <property type="project" value="UniProtKB-UniRule"/>
</dbReference>
<dbReference type="GO" id="GO:0006730">
    <property type="term" value="P:one-carbon metabolic process"/>
    <property type="evidence" value="ECO:0007669"/>
    <property type="project" value="UniProtKB-KW"/>
</dbReference>
<dbReference type="GO" id="GO:0006556">
    <property type="term" value="P:S-adenosylmethionine biosynthetic process"/>
    <property type="evidence" value="ECO:0007669"/>
    <property type="project" value="UniProtKB-UniRule"/>
</dbReference>
<dbReference type="CDD" id="cd18079">
    <property type="entry name" value="S-AdoMet_synt"/>
    <property type="match status" value="1"/>
</dbReference>
<dbReference type="FunFam" id="3.30.300.10:FF:000003">
    <property type="entry name" value="S-adenosylmethionine synthase"/>
    <property type="match status" value="1"/>
</dbReference>
<dbReference type="Gene3D" id="3.30.300.10">
    <property type="match status" value="3"/>
</dbReference>
<dbReference type="HAMAP" id="MF_00086">
    <property type="entry name" value="S_AdoMet_synth1"/>
    <property type="match status" value="1"/>
</dbReference>
<dbReference type="InterPro" id="IPR022631">
    <property type="entry name" value="ADOMET_SYNTHASE_CS"/>
</dbReference>
<dbReference type="InterPro" id="IPR022630">
    <property type="entry name" value="S-AdoMet_synt_C"/>
</dbReference>
<dbReference type="InterPro" id="IPR022629">
    <property type="entry name" value="S-AdoMet_synt_central"/>
</dbReference>
<dbReference type="InterPro" id="IPR022628">
    <property type="entry name" value="S-AdoMet_synt_N"/>
</dbReference>
<dbReference type="InterPro" id="IPR002133">
    <property type="entry name" value="S-AdoMet_synthetase"/>
</dbReference>
<dbReference type="InterPro" id="IPR022636">
    <property type="entry name" value="S-AdoMet_synthetase_sfam"/>
</dbReference>
<dbReference type="NCBIfam" id="TIGR01034">
    <property type="entry name" value="metK"/>
    <property type="match status" value="1"/>
</dbReference>
<dbReference type="PANTHER" id="PTHR11964">
    <property type="entry name" value="S-ADENOSYLMETHIONINE SYNTHETASE"/>
    <property type="match status" value="1"/>
</dbReference>
<dbReference type="Pfam" id="PF02773">
    <property type="entry name" value="S-AdoMet_synt_C"/>
    <property type="match status" value="1"/>
</dbReference>
<dbReference type="Pfam" id="PF02772">
    <property type="entry name" value="S-AdoMet_synt_M"/>
    <property type="match status" value="1"/>
</dbReference>
<dbReference type="Pfam" id="PF00438">
    <property type="entry name" value="S-AdoMet_synt_N"/>
    <property type="match status" value="1"/>
</dbReference>
<dbReference type="PIRSF" id="PIRSF000497">
    <property type="entry name" value="MAT"/>
    <property type="match status" value="1"/>
</dbReference>
<dbReference type="SUPFAM" id="SSF55973">
    <property type="entry name" value="S-adenosylmethionine synthetase"/>
    <property type="match status" value="3"/>
</dbReference>
<dbReference type="PROSITE" id="PS00376">
    <property type="entry name" value="ADOMET_SYNTHASE_1"/>
    <property type="match status" value="1"/>
</dbReference>
<dbReference type="PROSITE" id="PS00377">
    <property type="entry name" value="ADOMET_SYNTHASE_2"/>
    <property type="match status" value="1"/>
</dbReference>